<dbReference type="EMBL" id="AF034944">
    <property type="protein sequence ID" value="AAB88615.1"/>
    <property type="molecule type" value="mRNA"/>
</dbReference>
<dbReference type="RefSeq" id="NP_001104887.1">
    <property type="nucleotide sequence ID" value="NM_001111417.1"/>
</dbReference>
<dbReference type="SMR" id="P56330"/>
<dbReference type="FunCoup" id="P56330">
    <property type="interactions" value="3130"/>
</dbReference>
<dbReference type="STRING" id="4577.P56330"/>
<dbReference type="PaxDb" id="4577-GRMZM5G835323_P01"/>
<dbReference type="EnsemblPlants" id="Zm00001eb323110_T001">
    <property type="protein sequence ID" value="Zm00001eb323110_P001"/>
    <property type="gene ID" value="Zm00001eb323110"/>
</dbReference>
<dbReference type="GeneID" id="541664"/>
<dbReference type="Gramene" id="Zm00001eb323110_T001">
    <property type="protein sequence ID" value="Zm00001eb323110_P001"/>
    <property type="gene ID" value="Zm00001eb323110"/>
</dbReference>
<dbReference type="KEGG" id="zma:541664"/>
<dbReference type="eggNOG" id="KOG1770">
    <property type="taxonomic scope" value="Eukaryota"/>
</dbReference>
<dbReference type="HOGENOM" id="CLU_082805_3_0_1"/>
<dbReference type="InParanoid" id="P56330"/>
<dbReference type="OMA" id="VENHIHI"/>
<dbReference type="OrthoDB" id="10248435at2759"/>
<dbReference type="Proteomes" id="UP000007305">
    <property type="component" value="Chromosome 7"/>
</dbReference>
<dbReference type="ExpressionAtlas" id="P56330">
    <property type="expression patterns" value="baseline and differential"/>
</dbReference>
<dbReference type="GO" id="GO:0003723">
    <property type="term" value="F:RNA binding"/>
    <property type="evidence" value="ECO:0000318"/>
    <property type="project" value="GO_Central"/>
</dbReference>
<dbReference type="GO" id="GO:0003743">
    <property type="term" value="F:translation initiation factor activity"/>
    <property type="evidence" value="ECO:0007669"/>
    <property type="project" value="InterPro"/>
</dbReference>
<dbReference type="GO" id="GO:0006417">
    <property type="term" value="P:regulation of translation"/>
    <property type="evidence" value="ECO:0007669"/>
    <property type="project" value="UniProtKB-KW"/>
</dbReference>
<dbReference type="CDD" id="cd11566">
    <property type="entry name" value="eIF1_SUI1"/>
    <property type="match status" value="1"/>
</dbReference>
<dbReference type="FunFam" id="3.30.780.10:FF:000001">
    <property type="entry name" value="Eukaryotic translation initiation factor SUI1"/>
    <property type="match status" value="1"/>
</dbReference>
<dbReference type="Gene3D" id="3.30.780.10">
    <property type="entry name" value="SUI1-like domain"/>
    <property type="match status" value="1"/>
</dbReference>
<dbReference type="InterPro" id="IPR001950">
    <property type="entry name" value="SUI1"/>
</dbReference>
<dbReference type="InterPro" id="IPR036877">
    <property type="entry name" value="SUI1_dom_sf"/>
</dbReference>
<dbReference type="InterPro" id="IPR005874">
    <property type="entry name" value="SUI1_euk"/>
</dbReference>
<dbReference type="NCBIfam" id="TIGR01160">
    <property type="entry name" value="SUI1_MOF2"/>
    <property type="match status" value="1"/>
</dbReference>
<dbReference type="PANTHER" id="PTHR10388">
    <property type="entry name" value="EUKARYOTIC TRANSLATION INITIATION FACTOR SUI1"/>
    <property type="match status" value="1"/>
</dbReference>
<dbReference type="Pfam" id="PF01253">
    <property type="entry name" value="SUI1"/>
    <property type="match status" value="1"/>
</dbReference>
<dbReference type="PIRSF" id="PIRSF004499">
    <property type="entry name" value="SUI1_euk"/>
    <property type="match status" value="1"/>
</dbReference>
<dbReference type="SUPFAM" id="SSF55159">
    <property type="entry name" value="eIF1-like"/>
    <property type="match status" value="1"/>
</dbReference>
<dbReference type="PROSITE" id="PS50296">
    <property type="entry name" value="SUI1"/>
    <property type="match status" value="1"/>
</dbReference>
<protein>
    <recommendedName>
        <fullName>Protein translation factor SUI1 homolog</fullName>
    </recommendedName>
    <alternativeName>
        <fullName>Protein GOS2</fullName>
    </alternativeName>
</protein>
<accession>P56330</accession>
<feature type="chain" id="PRO_0000130570" description="Protein translation factor SUI1 homolog">
    <location>
        <begin position="1"/>
        <end position="115"/>
    </location>
</feature>
<name>SUI1_MAIZE</name>
<gene>
    <name type="primary">TIF</name>
</gene>
<sequence length="115" mass="12704">MSDLDIQIPTAFDPFAEANAGDSGAAAGSKDYVHVRIQQRNGRKSLTTVQGLKKEFSYSKILKDLKKEFCCNGTVVQDPELGQVIQLQGDQRKNVSNFLVQAGIVKKEHIKIHGF</sequence>
<evidence type="ECO:0000305" key="1"/>
<keyword id="KW-0648">Protein biosynthesis</keyword>
<keyword id="KW-1185">Reference proteome</keyword>
<keyword id="KW-0810">Translation regulation</keyword>
<organism>
    <name type="scientific">Zea mays</name>
    <name type="common">Maize</name>
    <dbReference type="NCBI Taxonomy" id="4577"/>
    <lineage>
        <taxon>Eukaryota</taxon>
        <taxon>Viridiplantae</taxon>
        <taxon>Streptophyta</taxon>
        <taxon>Embryophyta</taxon>
        <taxon>Tracheophyta</taxon>
        <taxon>Spermatophyta</taxon>
        <taxon>Magnoliopsida</taxon>
        <taxon>Liliopsida</taxon>
        <taxon>Poales</taxon>
        <taxon>Poaceae</taxon>
        <taxon>PACMAD clade</taxon>
        <taxon>Panicoideae</taxon>
        <taxon>Andropogonodae</taxon>
        <taxon>Andropogoneae</taxon>
        <taxon>Tripsacinae</taxon>
        <taxon>Zea</taxon>
    </lineage>
</organism>
<proteinExistence type="inferred from homology"/>
<comment type="function">
    <text>Probably involved in translation.</text>
</comment>
<comment type="similarity">
    <text evidence="1">Belongs to the SUI1 family.</text>
</comment>
<reference key="1">
    <citation type="submission" date="1997-11" db="EMBL/GenBank/DDBJ databases">
        <authorList>
            <person name="Kitzes G.A."/>
            <person name="Baysdorfer C."/>
        </authorList>
    </citation>
    <scope>NUCLEOTIDE SEQUENCE [MRNA]</scope>
    <source>
        <strain>cv. B73</strain>
    </source>
</reference>